<accession>A6WVY7</accession>
<organism>
    <name type="scientific">Brucella anthropi (strain ATCC 49188 / DSM 6882 / CCUG 24695 / JCM 21032 / LMG 3331 / NBRC 15819 / NCTC 12168 / Alc 37)</name>
    <name type="common">Ochrobactrum anthropi</name>
    <dbReference type="NCBI Taxonomy" id="439375"/>
    <lineage>
        <taxon>Bacteria</taxon>
        <taxon>Pseudomonadati</taxon>
        <taxon>Pseudomonadota</taxon>
        <taxon>Alphaproteobacteria</taxon>
        <taxon>Hyphomicrobiales</taxon>
        <taxon>Brucellaceae</taxon>
        <taxon>Brucella/Ochrobactrum group</taxon>
        <taxon>Brucella</taxon>
    </lineage>
</organism>
<gene>
    <name evidence="1" type="primary">mscL</name>
    <name type="ordered locus">Oant_0410</name>
</gene>
<reference key="1">
    <citation type="journal article" date="2011" name="J. Bacteriol.">
        <title>Genome of Ochrobactrum anthropi ATCC 49188 T, a versatile opportunistic pathogen and symbiont of several eukaryotic hosts.</title>
        <authorList>
            <person name="Chain P.S."/>
            <person name="Lang D.M."/>
            <person name="Comerci D.J."/>
            <person name="Malfatti S.A."/>
            <person name="Vergez L.M."/>
            <person name="Shin M."/>
            <person name="Ugalde R.A."/>
            <person name="Garcia E."/>
            <person name="Tolmasky M.E."/>
        </authorList>
    </citation>
    <scope>NUCLEOTIDE SEQUENCE [LARGE SCALE GENOMIC DNA]</scope>
    <source>
        <strain>ATCC 49188 / DSM 6882 / CCUG 24695 / JCM 21032 / LMG 3331 / NBRC 15819 / NCTC 12168 / Alc 37</strain>
    </source>
</reference>
<keyword id="KW-0997">Cell inner membrane</keyword>
<keyword id="KW-1003">Cell membrane</keyword>
<keyword id="KW-0407">Ion channel</keyword>
<keyword id="KW-0406">Ion transport</keyword>
<keyword id="KW-0472">Membrane</keyword>
<keyword id="KW-1185">Reference proteome</keyword>
<keyword id="KW-0812">Transmembrane</keyword>
<keyword id="KW-1133">Transmembrane helix</keyword>
<keyword id="KW-0813">Transport</keyword>
<dbReference type="EMBL" id="CP000758">
    <property type="protein sequence ID" value="ABS13141.1"/>
    <property type="molecule type" value="Genomic_DNA"/>
</dbReference>
<dbReference type="RefSeq" id="WP_010658231.1">
    <property type="nucleotide sequence ID" value="NC_009667.1"/>
</dbReference>
<dbReference type="SMR" id="A6WVY7"/>
<dbReference type="STRING" id="439375.Oant_0410"/>
<dbReference type="GeneID" id="61316580"/>
<dbReference type="KEGG" id="oan:Oant_0410"/>
<dbReference type="PATRIC" id="fig|439375.7.peg.436"/>
<dbReference type="eggNOG" id="COG1970">
    <property type="taxonomic scope" value="Bacteria"/>
</dbReference>
<dbReference type="HOGENOM" id="CLU_095787_0_1_5"/>
<dbReference type="PhylomeDB" id="A6WVY7"/>
<dbReference type="Proteomes" id="UP000002301">
    <property type="component" value="Chromosome 1"/>
</dbReference>
<dbReference type="GO" id="GO:0005886">
    <property type="term" value="C:plasma membrane"/>
    <property type="evidence" value="ECO:0007669"/>
    <property type="project" value="UniProtKB-SubCell"/>
</dbReference>
<dbReference type="GO" id="GO:0008381">
    <property type="term" value="F:mechanosensitive monoatomic ion channel activity"/>
    <property type="evidence" value="ECO:0007669"/>
    <property type="project" value="UniProtKB-UniRule"/>
</dbReference>
<dbReference type="Gene3D" id="1.10.1200.120">
    <property type="entry name" value="Large-conductance mechanosensitive channel, MscL, domain 1"/>
    <property type="match status" value="1"/>
</dbReference>
<dbReference type="HAMAP" id="MF_00115">
    <property type="entry name" value="MscL"/>
    <property type="match status" value="1"/>
</dbReference>
<dbReference type="InterPro" id="IPR019823">
    <property type="entry name" value="Mechanosensitive_channel_CS"/>
</dbReference>
<dbReference type="InterPro" id="IPR001185">
    <property type="entry name" value="MS_channel"/>
</dbReference>
<dbReference type="InterPro" id="IPR037673">
    <property type="entry name" value="MSC/AndL"/>
</dbReference>
<dbReference type="InterPro" id="IPR036019">
    <property type="entry name" value="MscL_channel"/>
</dbReference>
<dbReference type="NCBIfam" id="TIGR00220">
    <property type="entry name" value="mscL"/>
    <property type="match status" value="1"/>
</dbReference>
<dbReference type="NCBIfam" id="NF001843">
    <property type="entry name" value="PRK00567.1-4"/>
    <property type="match status" value="1"/>
</dbReference>
<dbReference type="NCBIfam" id="NF010557">
    <property type="entry name" value="PRK13952.1"/>
    <property type="match status" value="1"/>
</dbReference>
<dbReference type="PANTHER" id="PTHR30266:SF2">
    <property type="entry name" value="LARGE-CONDUCTANCE MECHANOSENSITIVE CHANNEL"/>
    <property type="match status" value="1"/>
</dbReference>
<dbReference type="PANTHER" id="PTHR30266">
    <property type="entry name" value="MECHANOSENSITIVE CHANNEL MSCL"/>
    <property type="match status" value="1"/>
</dbReference>
<dbReference type="Pfam" id="PF01741">
    <property type="entry name" value="MscL"/>
    <property type="match status" value="1"/>
</dbReference>
<dbReference type="PRINTS" id="PR01264">
    <property type="entry name" value="MECHCHANNEL"/>
</dbReference>
<dbReference type="SUPFAM" id="SSF81330">
    <property type="entry name" value="Gated mechanosensitive channel"/>
    <property type="match status" value="1"/>
</dbReference>
<dbReference type="PROSITE" id="PS01327">
    <property type="entry name" value="MSCL"/>
    <property type="match status" value="1"/>
</dbReference>
<proteinExistence type="inferred from homology"/>
<name>MSCL_BRUA4</name>
<comment type="function">
    <text evidence="1">Channel that opens in response to stretch forces in the membrane lipid bilayer. May participate in the regulation of osmotic pressure changes within the cell.</text>
</comment>
<comment type="subunit">
    <text evidence="1">Homopentamer.</text>
</comment>
<comment type="subcellular location">
    <subcellularLocation>
        <location evidence="1">Cell inner membrane</location>
        <topology evidence="1">Multi-pass membrane protein</topology>
    </subcellularLocation>
</comment>
<comment type="similarity">
    <text evidence="1">Belongs to the MscL family.</text>
</comment>
<evidence type="ECO:0000255" key="1">
    <source>
        <dbReference type="HAMAP-Rule" id="MF_00115"/>
    </source>
</evidence>
<protein>
    <recommendedName>
        <fullName evidence="1">Large-conductance mechanosensitive channel</fullName>
    </recommendedName>
</protein>
<sequence length="137" mass="14888">MLKEFKEFALKGNMVDLAIGVIIGGAFGGLVNSIVNDIIMPIIGLITGGIDFSNMFIQLAGEPRATLAAAREAGATIAYGNFVTLLINFLIIAWVLFLVVKGMNRMKKKEEAKPEPEAPREEVLLTEIRDLLAKQKA</sequence>
<feature type="chain" id="PRO_1000015402" description="Large-conductance mechanosensitive channel">
    <location>
        <begin position="1"/>
        <end position="137"/>
    </location>
</feature>
<feature type="transmembrane region" description="Helical" evidence="1">
    <location>
        <begin position="15"/>
        <end position="35"/>
    </location>
</feature>
<feature type="transmembrane region" description="Helical" evidence="1">
    <location>
        <begin position="38"/>
        <end position="58"/>
    </location>
</feature>
<feature type="transmembrane region" description="Helical" evidence="1">
    <location>
        <begin position="80"/>
        <end position="100"/>
    </location>
</feature>